<protein>
    <recommendedName>
        <fullName evidence="1">RNA-binding protein Hfq</fullName>
    </recommendedName>
</protein>
<organism>
    <name type="scientific">Pseudomonas syringae pv. syringae (strain B728a)</name>
    <dbReference type="NCBI Taxonomy" id="205918"/>
    <lineage>
        <taxon>Bacteria</taxon>
        <taxon>Pseudomonadati</taxon>
        <taxon>Pseudomonadota</taxon>
        <taxon>Gammaproteobacteria</taxon>
        <taxon>Pseudomonadales</taxon>
        <taxon>Pseudomonadaceae</taxon>
        <taxon>Pseudomonas</taxon>
        <taxon>Pseudomonas syringae</taxon>
    </lineage>
</organism>
<feature type="chain" id="PRO_0000265176" description="RNA-binding protein Hfq">
    <location>
        <begin position="1"/>
        <end position="86"/>
    </location>
</feature>
<feature type="domain" description="Sm" evidence="2">
    <location>
        <begin position="9"/>
        <end position="68"/>
    </location>
</feature>
<proteinExistence type="inferred from homology"/>
<sequence length="86" mass="9354">MSKGHSLQDPYLNTLRKEKVGVSIYLVNGIKLQGTIESFDQFVILLKNTVSQMVYKHAISTVVPVRPIRLPSATDADGADAEPGNA</sequence>
<reference key="1">
    <citation type="journal article" date="2005" name="Proc. Natl. Acad. Sci. U.S.A.">
        <title>Comparison of the complete genome sequences of Pseudomonas syringae pv. syringae B728a and pv. tomato DC3000.</title>
        <authorList>
            <person name="Feil H."/>
            <person name="Feil W.S."/>
            <person name="Chain P."/>
            <person name="Larimer F."/>
            <person name="Dibartolo G."/>
            <person name="Copeland A."/>
            <person name="Lykidis A."/>
            <person name="Trong S."/>
            <person name="Nolan M."/>
            <person name="Goltsman E."/>
            <person name="Thiel J."/>
            <person name="Malfatti S."/>
            <person name="Loper J.E."/>
            <person name="Lapidus A."/>
            <person name="Detter J.C."/>
            <person name="Land M."/>
            <person name="Richardson P.M."/>
            <person name="Kyrpides N.C."/>
            <person name="Ivanova N."/>
            <person name="Lindow S.E."/>
        </authorList>
    </citation>
    <scope>NUCLEOTIDE SEQUENCE [LARGE SCALE GENOMIC DNA]</scope>
    <source>
        <strain>B728a</strain>
    </source>
</reference>
<accession>Q4ZYY0</accession>
<keyword id="KW-0694">RNA-binding</keyword>
<keyword id="KW-0346">Stress response</keyword>
<name>HFQ_PSEU2</name>
<evidence type="ECO:0000255" key="1">
    <source>
        <dbReference type="HAMAP-Rule" id="MF_00436"/>
    </source>
</evidence>
<evidence type="ECO:0000255" key="2">
    <source>
        <dbReference type="PROSITE-ProRule" id="PRU01346"/>
    </source>
</evidence>
<dbReference type="EMBL" id="CP000075">
    <property type="protein sequence ID" value="AAY35642.1"/>
    <property type="molecule type" value="Genomic_DNA"/>
</dbReference>
<dbReference type="RefSeq" id="WP_002551819.1">
    <property type="nucleotide sequence ID" value="NC_007005.1"/>
</dbReference>
<dbReference type="RefSeq" id="YP_233680.1">
    <property type="nucleotide sequence ID" value="NC_007005.1"/>
</dbReference>
<dbReference type="SMR" id="Q4ZYY0"/>
<dbReference type="STRING" id="205918.Psyr_0572"/>
<dbReference type="GeneID" id="96216907"/>
<dbReference type="KEGG" id="psb:Psyr_0572"/>
<dbReference type="PATRIC" id="fig|205918.7.peg.595"/>
<dbReference type="eggNOG" id="COG1923">
    <property type="taxonomic scope" value="Bacteria"/>
</dbReference>
<dbReference type="HOGENOM" id="CLU_113688_2_2_6"/>
<dbReference type="OrthoDB" id="9799751at2"/>
<dbReference type="Proteomes" id="UP000000426">
    <property type="component" value="Chromosome"/>
</dbReference>
<dbReference type="GO" id="GO:0005829">
    <property type="term" value="C:cytosol"/>
    <property type="evidence" value="ECO:0007669"/>
    <property type="project" value="TreeGrafter"/>
</dbReference>
<dbReference type="GO" id="GO:0003723">
    <property type="term" value="F:RNA binding"/>
    <property type="evidence" value="ECO:0007669"/>
    <property type="project" value="UniProtKB-UniRule"/>
</dbReference>
<dbReference type="GO" id="GO:0006355">
    <property type="term" value="P:regulation of DNA-templated transcription"/>
    <property type="evidence" value="ECO:0007669"/>
    <property type="project" value="InterPro"/>
</dbReference>
<dbReference type="GO" id="GO:0043487">
    <property type="term" value="P:regulation of RNA stability"/>
    <property type="evidence" value="ECO:0007669"/>
    <property type="project" value="TreeGrafter"/>
</dbReference>
<dbReference type="GO" id="GO:0045974">
    <property type="term" value="P:regulation of translation, ncRNA-mediated"/>
    <property type="evidence" value="ECO:0007669"/>
    <property type="project" value="TreeGrafter"/>
</dbReference>
<dbReference type="CDD" id="cd01716">
    <property type="entry name" value="Hfq"/>
    <property type="match status" value="1"/>
</dbReference>
<dbReference type="FunFam" id="2.30.30.100:FF:000001">
    <property type="entry name" value="RNA-binding protein Hfq"/>
    <property type="match status" value="1"/>
</dbReference>
<dbReference type="Gene3D" id="2.30.30.100">
    <property type="match status" value="1"/>
</dbReference>
<dbReference type="HAMAP" id="MF_00436">
    <property type="entry name" value="Hfq"/>
    <property type="match status" value="1"/>
</dbReference>
<dbReference type="InterPro" id="IPR005001">
    <property type="entry name" value="Hfq"/>
</dbReference>
<dbReference type="InterPro" id="IPR010920">
    <property type="entry name" value="LSM_dom_sf"/>
</dbReference>
<dbReference type="InterPro" id="IPR047575">
    <property type="entry name" value="Sm"/>
</dbReference>
<dbReference type="NCBIfam" id="TIGR02383">
    <property type="entry name" value="Hfq"/>
    <property type="match status" value="1"/>
</dbReference>
<dbReference type="NCBIfam" id="NF001602">
    <property type="entry name" value="PRK00395.1"/>
    <property type="match status" value="1"/>
</dbReference>
<dbReference type="PANTHER" id="PTHR34772">
    <property type="entry name" value="RNA-BINDING PROTEIN HFQ"/>
    <property type="match status" value="1"/>
</dbReference>
<dbReference type="PANTHER" id="PTHR34772:SF1">
    <property type="entry name" value="RNA-BINDING PROTEIN HFQ"/>
    <property type="match status" value="1"/>
</dbReference>
<dbReference type="Pfam" id="PF17209">
    <property type="entry name" value="Hfq"/>
    <property type="match status" value="1"/>
</dbReference>
<dbReference type="SUPFAM" id="SSF50182">
    <property type="entry name" value="Sm-like ribonucleoproteins"/>
    <property type="match status" value="1"/>
</dbReference>
<dbReference type="PROSITE" id="PS52002">
    <property type="entry name" value="SM"/>
    <property type="match status" value="1"/>
</dbReference>
<gene>
    <name evidence="1" type="primary">hfq</name>
    <name type="ordered locus">Psyr_0572</name>
</gene>
<comment type="function">
    <text evidence="1">RNA chaperone that binds small regulatory RNA (sRNAs) and mRNAs to facilitate mRNA translational regulation in response to envelope stress, environmental stress and changes in metabolite concentrations. Also binds with high specificity to tRNAs.</text>
</comment>
<comment type="subunit">
    <text evidence="1">Homohexamer.</text>
</comment>
<comment type="similarity">
    <text evidence="1">Belongs to the Hfq family.</text>
</comment>